<sequence length="201" mass="22407">MSIQHFQTKLGITKYSIVTNSNDSVTLRLMTEHDLAMLYEWLNRSHIVEWWGGEEARPTLADVQEQYLPSVLAQESVTPYIAMLNGEPIGYAQSYVALGSGDGWWEEETDPGVRGIDQLLANASQLGKGLGTKLVRALVELLFNDPEVTKIQTDPSPSNLRAIRCYEKAGFERQGTVTTPDGPAVYMVQTRQAFERTRSVA</sequence>
<gene>
    <name type="primary">aacA4</name>
</gene>
<organism>
    <name type="scientific">Klebsiella pneumoniae</name>
    <dbReference type="NCBI Taxonomy" id="573"/>
    <lineage>
        <taxon>Bacteria</taxon>
        <taxon>Pseudomonadati</taxon>
        <taxon>Pseudomonadota</taxon>
        <taxon>Gammaproteobacteria</taxon>
        <taxon>Enterobacterales</taxon>
        <taxon>Enterobacteriaceae</taxon>
        <taxon>Klebsiella/Raoultella group</taxon>
        <taxon>Klebsiella</taxon>
        <taxon>Klebsiella pneumoniae complex</taxon>
    </lineage>
</organism>
<dbReference type="EC" id="2.3.1.82"/>
<dbReference type="EMBL" id="M21682">
    <property type="protein sequence ID" value="AAA69747.1"/>
    <property type="molecule type" value="Genomic_DNA"/>
</dbReference>
<dbReference type="EMBL" id="M21682">
    <property type="protein sequence ID" value="AAA69748.1"/>
    <property type="status" value="ALT_INIT"/>
    <property type="molecule type" value="Genomic_DNA"/>
</dbReference>
<dbReference type="EMBL" id="M55547">
    <property type="protein sequence ID" value="AAA98404.1"/>
    <property type="molecule type" value="Genomic_DNA"/>
</dbReference>
<dbReference type="PIR" id="B31104">
    <property type="entry name" value="B31104"/>
</dbReference>
<dbReference type="RefSeq" id="NP_608307.1">
    <property type="nucleotide sequence ID" value="NC_003486.1"/>
</dbReference>
<dbReference type="RefSeq" id="YP_001928078.1">
    <property type="nucleotide sequence ID" value="NC_010726.1"/>
</dbReference>
<dbReference type="RefSeq" id="YP_001928081.1">
    <property type="nucleotide sequence ID" value="NC_010726.1"/>
</dbReference>
<dbReference type="RefSeq" id="YP_002286819.1">
    <property type="nucleotide sequence ID" value="NC_011382.1"/>
</dbReference>
<dbReference type="RefSeq" id="YP_006958960.1">
    <property type="nucleotide sequence ID" value="NC_019156.1"/>
</dbReference>
<dbReference type="RefSeq" id="YP_006959190.1">
    <property type="nucleotide sequence ID" value="NC_019159.1"/>
</dbReference>
<dbReference type="RefSeq" id="YP_008146463.1">
    <property type="nucleotide sequence ID" value="NC_021656.1"/>
</dbReference>
<dbReference type="RefSeq" id="YP_008166967.1">
    <property type="nucleotide sequence ID" value="NC_021666.1"/>
</dbReference>
<dbReference type="SMR" id="P19650"/>
<dbReference type="KEGG" id="ag:AAA69747"/>
<dbReference type="BRENDA" id="2.3.1.82">
    <property type="organism ID" value="2814"/>
</dbReference>
<dbReference type="GO" id="GO:0047663">
    <property type="term" value="F:aminoglycoside 6'-N-acetyltransferase activity"/>
    <property type="evidence" value="ECO:0007669"/>
    <property type="project" value="UniProtKB-EC"/>
</dbReference>
<dbReference type="GO" id="GO:0046677">
    <property type="term" value="P:response to antibiotic"/>
    <property type="evidence" value="ECO:0000315"/>
    <property type="project" value="UniProtKB"/>
</dbReference>
<dbReference type="CDD" id="cd04301">
    <property type="entry name" value="NAT_SF"/>
    <property type="match status" value="1"/>
</dbReference>
<dbReference type="FunFam" id="3.40.630.30:FF:000025">
    <property type="entry name" value="Aminoglycoside acetyltransferase"/>
    <property type="match status" value="1"/>
</dbReference>
<dbReference type="Gene3D" id="3.40.630.30">
    <property type="match status" value="1"/>
</dbReference>
<dbReference type="InterPro" id="IPR016181">
    <property type="entry name" value="Acyl_CoA_acyltransferase"/>
</dbReference>
<dbReference type="InterPro" id="IPR000182">
    <property type="entry name" value="GNAT_dom"/>
</dbReference>
<dbReference type="InterPro" id="IPR030971">
    <property type="entry name" value="N6_acetyl_AAC6"/>
</dbReference>
<dbReference type="NCBIfam" id="NF033074">
    <property type="entry name" value="AAC_6p_Ib"/>
    <property type="match status" value="1"/>
</dbReference>
<dbReference type="NCBIfam" id="NF012165">
    <property type="entry name" value="AAC_6p_set_A"/>
    <property type="match status" value="1"/>
</dbReference>
<dbReference type="NCBIfam" id="TIGR04431">
    <property type="entry name" value="N6_acetyl_AAC6"/>
    <property type="match status" value="1"/>
</dbReference>
<dbReference type="PANTHER" id="PTHR31438">
    <property type="entry name" value="LYSINE N-ACYLTRANSFERASE C17G9.06C-RELATED"/>
    <property type="match status" value="1"/>
</dbReference>
<dbReference type="PANTHER" id="PTHR31438:SF1">
    <property type="entry name" value="LYSINE N-ACYLTRANSFERASE C17G9.06C-RELATED"/>
    <property type="match status" value="1"/>
</dbReference>
<dbReference type="Pfam" id="PF13523">
    <property type="entry name" value="Acetyltransf_8"/>
    <property type="match status" value="1"/>
</dbReference>
<dbReference type="SUPFAM" id="SSF55729">
    <property type="entry name" value="Acyl-CoA N-acyltransferases (Nat)"/>
    <property type="match status" value="1"/>
</dbReference>
<dbReference type="PROSITE" id="PS51186">
    <property type="entry name" value="GNAT"/>
    <property type="match status" value="1"/>
</dbReference>
<protein>
    <recommendedName>
        <fullName>Aminoglycoside N(6')-acetyltransferase type 1</fullName>
        <ecNumber>2.3.1.82</ecNumber>
    </recommendedName>
    <alternativeName>
        <fullName>AAC(6')-I</fullName>
    </alternativeName>
    <alternativeName>
        <fullName>Aminoglycoside resistance protein</fullName>
    </alternativeName>
</protein>
<evidence type="ECO:0000250" key="1"/>
<evidence type="ECO:0000255" key="2">
    <source>
        <dbReference type="PROSITE-ProRule" id="PRU00532"/>
    </source>
</evidence>
<evidence type="ECO:0000269" key="3">
    <source>
    </source>
</evidence>
<evidence type="ECO:0000305" key="4"/>
<accession>P19650</accession>
<name>AAC6_KLEPN</name>
<reference key="1">
    <citation type="journal article" date="1988" name="J. Bacteriol.">
        <title>Sequencing and expression of the 6'-N-acetyltransferase gene of transposon Tn1331 from Klebsiella pneumoniae.</title>
        <authorList>
            <person name="Nobuta K."/>
            <person name="Tolmasky M.E."/>
            <person name="Crosa L.M."/>
            <person name="Crosa J.H."/>
        </authorList>
    </citation>
    <scope>NUCLEOTIDE SEQUENCE [GENOMIC DNA]</scope>
    <scope>FUNCTION</scope>
    <source>
        <transposon>Tn1331</transposon>
    </source>
</reference>
<reference key="2">
    <citation type="journal article" date="1990" name="Plasmid">
        <title>Sequencing and expression of aadA, bla, and tnpR from the multiresistance transposon Tn1331.</title>
        <authorList>
            <person name="Tolmasky M.E."/>
        </authorList>
    </citation>
    <scope>NUCLEOTIDE SEQUENCE [GENOMIC DNA]</scope>
    <source>
        <transposon>Tn1331</transposon>
    </source>
</reference>
<keyword id="KW-0012">Acyltransferase</keyword>
<keyword id="KW-0046">Antibiotic resistance</keyword>
<keyword id="KW-0614">Plasmid</keyword>
<keyword id="KW-0808">Transferase</keyword>
<keyword id="KW-0814">Transposable element</keyword>
<proteinExistence type="inferred from homology"/>
<feature type="chain" id="PRO_0000068553" description="Aminoglycoside N(6')-acetyltransferase type 1">
    <location>
        <begin position="1"/>
        <end position="201"/>
    </location>
</feature>
<feature type="domain" description="N-acetyltransferase" evidence="2">
    <location>
        <begin position="25"/>
        <end position="192"/>
    </location>
</feature>
<feature type="binding site" evidence="1">
    <location>
        <position position="51"/>
    </location>
    <ligand>
        <name>substrate</name>
    </ligand>
</feature>
<feature type="binding site" evidence="1">
    <location>
        <position position="154"/>
    </location>
    <ligand>
        <name>substrate</name>
    </ligand>
</feature>
<feature type="binding site" evidence="1">
    <location>
        <position position="159"/>
    </location>
    <ligand>
        <name>acetyl-CoA</name>
        <dbReference type="ChEBI" id="CHEBI:57288"/>
    </ligand>
</feature>
<geneLocation type="plasmid">
    <name>pJHC-MW1</name>
</geneLocation>
<comment type="function">
    <text evidence="3">Catalyzes the transfer of an acetyl group from acetyl-CoA to the 6'-amino group of aminoglycoside molecules conferring resistance to antibiotics containing the purpurosamine ring including amikacin.</text>
</comment>
<comment type="catalytic activity">
    <reaction>
        <text>kanamycin B + acetyl-CoA = N(6')-acetylkanamycin B + CoA + H(+)</text>
        <dbReference type="Rhea" id="RHEA:16449"/>
        <dbReference type="ChEBI" id="CHEBI:15378"/>
        <dbReference type="ChEBI" id="CHEBI:57287"/>
        <dbReference type="ChEBI" id="CHEBI:57288"/>
        <dbReference type="ChEBI" id="CHEBI:58390"/>
        <dbReference type="ChEBI" id="CHEBI:58549"/>
        <dbReference type="EC" id="2.3.1.82"/>
    </reaction>
</comment>
<comment type="subunit">
    <text evidence="1">Homodimer.</text>
</comment>
<comment type="sequence caution" evidence="4">
    <conflict type="erroneous initiation">
        <sequence resource="EMBL-CDS" id="AAA69748"/>
    </conflict>
    <text>Truncated N-terminus.</text>
</comment>